<protein>
    <recommendedName>
        <fullName evidence="2">Elongation factor Tu</fullName>
        <shortName evidence="2">EF-Tu</shortName>
        <ecNumber evidence="2">3.6.5.3</ecNumber>
    </recommendedName>
</protein>
<accession>Q8KHX9</accession>
<reference key="1">
    <citation type="journal article" date="2002" name="Mol. Biol. Evol.">
        <title>Proliferation and deterioration of Rickettsia palindromic elements.</title>
        <authorList>
            <person name="Amiri H."/>
            <person name="Alsmark C.M."/>
            <person name="Andersson S.G.E."/>
        </authorList>
    </citation>
    <scope>NUCLEOTIDE SEQUENCE [GENOMIC DNA]</scope>
    <source>
        <strain>ATCC 49882 / DSM 28221 / CCUG 30454 / Houston 1</strain>
    </source>
</reference>
<reference key="2">
    <citation type="journal article" date="2004" name="Proc. Natl. Acad. Sci. U.S.A.">
        <title>The louse-borne human pathogen Bartonella quintana is a genomic derivative of the zoonotic agent Bartonella henselae.</title>
        <authorList>
            <person name="Alsmark U.C.M."/>
            <person name="Frank A.C."/>
            <person name="Karlberg E.O."/>
            <person name="Legault B.-A."/>
            <person name="Ardell D.H."/>
            <person name="Canbaeck B."/>
            <person name="Eriksson A.-S."/>
            <person name="Naeslund A.K."/>
            <person name="Handley S.A."/>
            <person name="Huvet M."/>
            <person name="La Scola B."/>
            <person name="Holmberg M."/>
            <person name="Andersson S.G.E."/>
        </authorList>
    </citation>
    <scope>NUCLEOTIDE SEQUENCE [LARGE SCALE GENOMIC DNA]</scope>
    <source>
        <strain>ATCC 49882 / DSM 28221 / CCUG 30454 / Houston 1</strain>
    </source>
</reference>
<dbReference type="EC" id="3.6.5.3" evidence="2"/>
<dbReference type="EMBL" id="AY099292">
    <property type="protein sequence ID" value="AAM92278.1"/>
    <property type="molecule type" value="Genomic_DNA"/>
</dbReference>
<dbReference type="EMBL" id="AY099295">
    <property type="protein sequence ID" value="AAM92281.1"/>
    <property type="molecule type" value="Genomic_DNA"/>
</dbReference>
<dbReference type="EMBL" id="BX897699">
    <property type="protein sequence ID" value="CAF27407.1"/>
    <property type="molecule type" value="Genomic_DNA"/>
</dbReference>
<dbReference type="EMBL" id="BX897699">
    <property type="protein sequence ID" value="CAF27844.1"/>
    <property type="molecule type" value="Genomic_DNA"/>
</dbReference>
<dbReference type="SMR" id="Q8KHX9"/>
<dbReference type="PaxDb" id="283166-BH06020"/>
<dbReference type="EnsemblBacteria" id="CAF27407">
    <property type="protein sequence ID" value="CAF27407"/>
    <property type="gene ID" value="BH06020"/>
</dbReference>
<dbReference type="EnsemblBacteria" id="CAF27844">
    <property type="protein sequence ID" value="CAF27844"/>
    <property type="gene ID" value="BH10530"/>
</dbReference>
<dbReference type="KEGG" id="bhe:BH06020"/>
<dbReference type="KEGG" id="bhe:BH10530"/>
<dbReference type="eggNOG" id="COG0050">
    <property type="taxonomic scope" value="Bacteria"/>
</dbReference>
<dbReference type="OrthoDB" id="9803139at2"/>
<dbReference type="Proteomes" id="UP000000421">
    <property type="component" value="Chromosome"/>
</dbReference>
<dbReference type="GO" id="GO:0005829">
    <property type="term" value="C:cytosol"/>
    <property type="evidence" value="ECO:0007669"/>
    <property type="project" value="TreeGrafter"/>
</dbReference>
<dbReference type="GO" id="GO:0005525">
    <property type="term" value="F:GTP binding"/>
    <property type="evidence" value="ECO:0007669"/>
    <property type="project" value="UniProtKB-UniRule"/>
</dbReference>
<dbReference type="GO" id="GO:0003924">
    <property type="term" value="F:GTPase activity"/>
    <property type="evidence" value="ECO:0007669"/>
    <property type="project" value="InterPro"/>
</dbReference>
<dbReference type="GO" id="GO:0097216">
    <property type="term" value="F:guanosine tetraphosphate binding"/>
    <property type="evidence" value="ECO:0007669"/>
    <property type="project" value="UniProtKB-ARBA"/>
</dbReference>
<dbReference type="GO" id="GO:0003746">
    <property type="term" value="F:translation elongation factor activity"/>
    <property type="evidence" value="ECO:0007669"/>
    <property type="project" value="UniProtKB-UniRule"/>
</dbReference>
<dbReference type="CDD" id="cd01884">
    <property type="entry name" value="EF_Tu"/>
    <property type="match status" value="1"/>
</dbReference>
<dbReference type="CDD" id="cd03697">
    <property type="entry name" value="EFTU_II"/>
    <property type="match status" value="1"/>
</dbReference>
<dbReference type="CDD" id="cd03707">
    <property type="entry name" value="EFTU_III"/>
    <property type="match status" value="1"/>
</dbReference>
<dbReference type="FunFam" id="2.40.30.10:FF:000001">
    <property type="entry name" value="Elongation factor Tu"/>
    <property type="match status" value="1"/>
</dbReference>
<dbReference type="FunFam" id="3.40.50.300:FF:000003">
    <property type="entry name" value="Elongation factor Tu"/>
    <property type="match status" value="1"/>
</dbReference>
<dbReference type="Gene3D" id="3.40.50.300">
    <property type="entry name" value="P-loop containing nucleotide triphosphate hydrolases"/>
    <property type="match status" value="1"/>
</dbReference>
<dbReference type="Gene3D" id="2.40.30.10">
    <property type="entry name" value="Translation factors"/>
    <property type="match status" value="2"/>
</dbReference>
<dbReference type="HAMAP" id="MF_00118_B">
    <property type="entry name" value="EF_Tu_B"/>
    <property type="match status" value="1"/>
</dbReference>
<dbReference type="InterPro" id="IPR041709">
    <property type="entry name" value="EF-Tu_GTP-bd"/>
</dbReference>
<dbReference type="InterPro" id="IPR050055">
    <property type="entry name" value="EF-Tu_GTPase"/>
</dbReference>
<dbReference type="InterPro" id="IPR004161">
    <property type="entry name" value="EFTu-like_2"/>
</dbReference>
<dbReference type="InterPro" id="IPR033720">
    <property type="entry name" value="EFTU_2"/>
</dbReference>
<dbReference type="InterPro" id="IPR031157">
    <property type="entry name" value="G_TR_CS"/>
</dbReference>
<dbReference type="InterPro" id="IPR027417">
    <property type="entry name" value="P-loop_NTPase"/>
</dbReference>
<dbReference type="InterPro" id="IPR005225">
    <property type="entry name" value="Small_GTP-bd"/>
</dbReference>
<dbReference type="InterPro" id="IPR000795">
    <property type="entry name" value="T_Tr_GTP-bd_dom"/>
</dbReference>
<dbReference type="InterPro" id="IPR009000">
    <property type="entry name" value="Transl_B-barrel_sf"/>
</dbReference>
<dbReference type="InterPro" id="IPR009001">
    <property type="entry name" value="Transl_elong_EF1A/Init_IF2_C"/>
</dbReference>
<dbReference type="InterPro" id="IPR004541">
    <property type="entry name" value="Transl_elong_EFTu/EF1A_bac/org"/>
</dbReference>
<dbReference type="InterPro" id="IPR004160">
    <property type="entry name" value="Transl_elong_EFTu/EF1A_C"/>
</dbReference>
<dbReference type="NCBIfam" id="TIGR00485">
    <property type="entry name" value="EF-Tu"/>
    <property type="match status" value="1"/>
</dbReference>
<dbReference type="NCBIfam" id="NF000766">
    <property type="entry name" value="PRK00049.1"/>
    <property type="match status" value="1"/>
</dbReference>
<dbReference type="NCBIfam" id="NF009372">
    <property type="entry name" value="PRK12735.1"/>
    <property type="match status" value="1"/>
</dbReference>
<dbReference type="NCBIfam" id="NF009373">
    <property type="entry name" value="PRK12736.1"/>
    <property type="match status" value="1"/>
</dbReference>
<dbReference type="NCBIfam" id="TIGR00231">
    <property type="entry name" value="small_GTP"/>
    <property type="match status" value="1"/>
</dbReference>
<dbReference type="PANTHER" id="PTHR43721:SF22">
    <property type="entry name" value="ELONGATION FACTOR TU, MITOCHONDRIAL"/>
    <property type="match status" value="1"/>
</dbReference>
<dbReference type="PANTHER" id="PTHR43721">
    <property type="entry name" value="ELONGATION FACTOR TU-RELATED"/>
    <property type="match status" value="1"/>
</dbReference>
<dbReference type="Pfam" id="PF00009">
    <property type="entry name" value="GTP_EFTU"/>
    <property type="match status" value="1"/>
</dbReference>
<dbReference type="Pfam" id="PF03144">
    <property type="entry name" value="GTP_EFTU_D2"/>
    <property type="match status" value="1"/>
</dbReference>
<dbReference type="Pfam" id="PF03143">
    <property type="entry name" value="GTP_EFTU_D3"/>
    <property type="match status" value="1"/>
</dbReference>
<dbReference type="PRINTS" id="PR00315">
    <property type="entry name" value="ELONGATNFCT"/>
</dbReference>
<dbReference type="SUPFAM" id="SSF50465">
    <property type="entry name" value="EF-Tu/eEF-1alpha/eIF2-gamma C-terminal domain"/>
    <property type="match status" value="1"/>
</dbReference>
<dbReference type="SUPFAM" id="SSF52540">
    <property type="entry name" value="P-loop containing nucleoside triphosphate hydrolases"/>
    <property type="match status" value="1"/>
</dbReference>
<dbReference type="SUPFAM" id="SSF50447">
    <property type="entry name" value="Translation proteins"/>
    <property type="match status" value="1"/>
</dbReference>
<dbReference type="PROSITE" id="PS00301">
    <property type="entry name" value="G_TR_1"/>
    <property type="match status" value="1"/>
</dbReference>
<dbReference type="PROSITE" id="PS51722">
    <property type="entry name" value="G_TR_2"/>
    <property type="match status" value="1"/>
</dbReference>
<feature type="chain" id="PRO_0000337322" description="Elongation factor Tu">
    <location>
        <begin position="1"/>
        <end position="391"/>
    </location>
</feature>
<feature type="domain" description="tr-type G">
    <location>
        <begin position="10"/>
        <end position="201"/>
    </location>
</feature>
<feature type="region of interest" description="G1" evidence="1">
    <location>
        <begin position="19"/>
        <end position="26"/>
    </location>
</feature>
<feature type="region of interest" description="G2" evidence="1">
    <location>
        <begin position="55"/>
        <end position="59"/>
    </location>
</feature>
<feature type="region of interest" description="G3" evidence="1">
    <location>
        <begin position="76"/>
        <end position="79"/>
    </location>
</feature>
<feature type="region of interest" description="G4" evidence="1">
    <location>
        <begin position="131"/>
        <end position="134"/>
    </location>
</feature>
<feature type="region of interest" description="G5" evidence="1">
    <location>
        <begin position="169"/>
        <end position="171"/>
    </location>
</feature>
<feature type="binding site" evidence="2">
    <location>
        <begin position="19"/>
        <end position="26"/>
    </location>
    <ligand>
        <name>GTP</name>
        <dbReference type="ChEBI" id="CHEBI:37565"/>
    </ligand>
</feature>
<feature type="binding site" evidence="2">
    <location>
        <position position="26"/>
    </location>
    <ligand>
        <name>Mg(2+)</name>
        <dbReference type="ChEBI" id="CHEBI:18420"/>
    </ligand>
</feature>
<feature type="binding site" evidence="2">
    <location>
        <begin position="76"/>
        <end position="80"/>
    </location>
    <ligand>
        <name>GTP</name>
        <dbReference type="ChEBI" id="CHEBI:37565"/>
    </ligand>
</feature>
<feature type="binding site" evidence="2">
    <location>
        <begin position="131"/>
        <end position="134"/>
    </location>
    <ligand>
        <name>GTP</name>
        <dbReference type="ChEBI" id="CHEBI:37565"/>
    </ligand>
</feature>
<sequence length="391" mass="42866">MAKSKFERTKPHVNIGTIGHVDHGKTSLTAAITKYFGEFKAYDQIDAAPEERARGITISTAHVEYETEKRHYAHVDCPGHADYVKNMITGAAQMDGAILVVSAADGPMPQTREHILLARQVGVPAIVVFLNKVDQVDDAELLELVELEVRELLSKYDFPGDDIPIVKGSALAALEDKDKSIGEDAVRLLMSEVDNYIPTPERPVDQPFLMPIEDVFSISGRGTVVTGRVERGVIKVGEEVEIIGIRPTSKTTVTGVEMFRKLLDQGQAGDNIGALLRGIDREGIERGQVLAKPASVTPHTRFKAEAYILTKDEGGRHTPFFTNYRPQFYFRTTDVTGIVTLPEGTEMVMPGDNVAMDVSLIVPIAMEEKLRFAIREGGRTVGAGIVSKIIE</sequence>
<proteinExistence type="inferred from homology"/>
<keyword id="KW-0963">Cytoplasm</keyword>
<keyword id="KW-0251">Elongation factor</keyword>
<keyword id="KW-0342">GTP-binding</keyword>
<keyword id="KW-0378">Hydrolase</keyword>
<keyword id="KW-0460">Magnesium</keyword>
<keyword id="KW-0479">Metal-binding</keyword>
<keyword id="KW-0547">Nucleotide-binding</keyword>
<keyword id="KW-0648">Protein biosynthesis</keyword>
<gene>
    <name evidence="2" type="primary">tuf1</name>
    <name type="synonym">tufB</name>
    <name type="ordered locus">BH06020</name>
</gene>
<gene>
    <name evidence="2" type="primary">tuf2</name>
    <name type="synonym">tufA</name>
    <name type="ordered locus">BH10530</name>
</gene>
<organism>
    <name type="scientific">Bartonella henselae (strain ATCC 49882 / DSM 28221 / CCUG 30454 / Houston 1)</name>
    <name type="common">Rochalimaea henselae</name>
    <dbReference type="NCBI Taxonomy" id="283166"/>
    <lineage>
        <taxon>Bacteria</taxon>
        <taxon>Pseudomonadati</taxon>
        <taxon>Pseudomonadota</taxon>
        <taxon>Alphaproteobacteria</taxon>
        <taxon>Hyphomicrobiales</taxon>
        <taxon>Bartonellaceae</taxon>
        <taxon>Bartonella</taxon>
    </lineage>
</organism>
<comment type="function">
    <text evidence="2">GTP hydrolase that promotes the GTP-dependent binding of aminoacyl-tRNA to the A-site of ribosomes during protein biosynthesis.</text>
</comment>
<comment type="catalytic activity">
    <reaction evidence="2">
        <text>GTP + H2O = GDP + phosphate + H(+)</text>
        <dbReference type="Rhea" id="RHEA:19669"/>
        <dbReference type="ChEBI" id="CHEBI:15377"/>
        <dbReference type="ChEBI" id="CHEBI:15378"/>
        <dbReference type="ChEBI" id="CHEBI:37565"/>
        <dbReference type="ChEBI" id="CHEBI:43474"/>
        <dbReference type="ChEBI" id="CHEBI:58189"/>
        <dbReference type="EC" id="3.6.5.3"/>
    </reaction>
    <physiologicalReaction direction="left-to-right" evidence="2">
        <dbReference type="Rhea" id="RHEA:19670"/>
    </physiologicalReaction>
</comment>
<comment type="subunit">
    <text evidence="2">Monomer.</text>
</comment>
<comment type="subcellular location">
    <subcellularLocation>
        <location evidence="2">Cytoplasm</location>
    </subcellularLocation>
</comment>
<comment type="similarity">
    <text evidence="2">Belongs to the TRAFAC class translation factor GTPase superfamily. Classic translation factor GTPase family. EF-Tu/EF-1A subfamily.</text>
</comment>
<evidence type="ECO:0000250" key="1"/>
<evidence type="ECO:0000255" key="2">
    <source>
        <dbReference type="HAMAP-Rule" id="MF_00118"/>
    </source>
</evidence>
<name>EFTU_BARHE</name>